<evidence type="ECO:0000255" key="1">
    <source>
        <dbReference type="PROSITE-ProRule" id="PRU00448"/>
    </source>
</evidence>
<evidence type="ECO:0000305" key="2"/>
<name>TNNC3_DROME</name>
<keyword id="KW-0106">Calcium</keyword>
<keyword id="KW-0479">Metal-binding</keyword>
<keyword id="KW-0514">Muscle protein</keyword>
<keyword id="KW-1185">Reference proteome</keyword>
<keyword id="KW-0677">Repeat</keyword>
<reference key="1">
    <citation type="journal article" date="1994" name="Biochem. Genet.">
        <title>Drosophila melanogaster genes encoding three troponin-C isoforms and a calmodulin-related protein.</title>
        <authorList>
            <person name="Fyrberg C."/>
            <person name="Parker H."/>
            <person name="Hutchison B."/>
            <person name="Fyrberg E.A."/>
        </authorList>
    </citation>
    <scope>NUCLEOTIDE SEQUENCE [MRNA]</scope>
</reference>
<reference key="2">
    <citation type="journal article" date="2000" name="Science">
        <title>The genome sequence of Drosophila melanogaster.</title>
        <authorList>
            <person name="Adams M.D."/>
            <person name="Celniker S.E."/>
            <person name="Holt R.A."/>
            <person name="Evans C.A."/>
            <person name="Gocayne J.D."/>
            <person name="Amanatides P.G."/>
            <person name="Scherer S.E."/>
            <person name="Li P.W."/>
            <person name="Hoskins R.A."/>
            <person name="Galle R.F."/>
            <person name="George R.A."/>
            <person name="Lewis S.E."/>
            <person name="Richards S."/>
            <person name="Ashburner M."/>
            <person name="Henderson S.N."/>
            <person name="Sutton G.G."/>
            <person name="Wortman J.R."/>
            <person name="Yandell M.D."/>
            <person name="Zhang Q."/>
            <person name="Chen L.X."/>
            <person name="Brandon R.C."/>
            <person name="Rogers Y.-H.C."/>
            <person name="Blazej R.G."/>
            <person name="Champe M."/>
            <person name="Pfeiffer B.D."/>
            <person name="Wan K.H."/>
            <person name="Doyle C."/>
            <person name="Baxter E.G."/>
            <person name="Helt G."/>
            <person name="Nelson C.R."/>
            <person name="Miklos G.L.G."/>
            <person name="Abril J.F."/>
            <person name="Agbayani A."/>
            <person name="An H.-J."/>
            <person name="Andrews-Pfannkoch C."/>
            <person name="Baldwin D."/>
            <person name="Ballew R.M."/>
            <person name="Basu A."/>
            <person name="Baxendale J."/>
            <person name="Bayraktaroglu L."/>
            <person name="Beasley E.M."/>
            <person name="Beeson K.Y."/>
            <person name="Benos P.V."/>
            <person name="Berman B.P."/>
            <person name="Bhandari D."/>
            <person name="Bolshakov S."/>
            <person name="Borkova D."/>
            <person name="Botchan M.R."/>
            <person name="Bouck J."/>
            <person name="Brokstein P."/>
            <person name="Brottier P."/>
            <person name="Burtis K.C."/>
            <person name="Busam D.A."/>
            <person name="Butler H."/>
            <person name="Cadieu E."/>
            <person name="Center A."/>
            <person name="Chandra I."/>
            <person name="Cherry J.M."/>
            <person name="Cawley S."/>
            <person name="Dahlke C."/>
            <person name="Davenport L.B."/>
            <person name="Davies P."/>
            <person name="de Pablos B."/>
            <person name="Delcher A."/>
            <person name="Deng Z."/>
            <person name="Mays A.D."/>
            <person name="Dew I."/>
            <person name="Dietz S.M."/>
            <person name="Dodson K."/>
            <person name="Doup L.E."/>
            <person name="Downes M."/>
            <person name="Dugan-Rocha S."/>
            <person name="Dunkov B.C."/>
            <person name="Dunn P."/>
            <person name="Durbin K.J."/>
            <person name="Evangelista C.C."/>
            <person name="Ferraz C."/>
            <person name="Ferriera S."/>
            <person name="Fleischmann W."/>
            <person name="Fosler C."/>
            <person name="Gabrielian A.E."/>
            <person name="Garg N.S."/>
            <person name="Gelbart W.M."/>
            <person name="Glasser K."/>
            <person name="Glodek A."/>
            <person name="Gong F."/>
            <person name="Gorrell J.H."/>
            <person name="Gu Z."/>
            <person name="Guan P."/>
            <person name="Harris M."/>
            <person name="Harris N.L."/>
            <person name="Harvey D.A."/>
            <person name="Heiman T.J."/>
            <person name="Hernandez J.R."/>
            <person name="Houck J."/>
            <person name="Hostin D."/>
            <person name="Houston K.A."/>
            <person name="Howland T.J."/>
            <person name="Wei M.-H."/>
            <person name="Ibegwam C."/>
            <person name="Jalali M."/>
            <person name="Kalush F."/>
            <person name="Karpen G.H."/>
            <person name="Ke Z."/>
            <person name="Kennison J.A."/>
            <person name="Ketchum K.A."/>
            <person name="Kimmel B.E."/>
            <person name="Kodira C.D."/>
            <person name="Kraft C.L."/>
            <person name="Kravitz S."/>
            <person name="Kulp D."/>
            <person name="Lai Z."/>
            <person name="Lasko P."/>
            <person name="Lei Y."/>
            <person name="Levitsky A.A."/>
            <person name="Li J.H."/>
            <person name="Li Z."/>
            <person name="Liang Y."/>
            <person name="Lin X."/>
            <person name="Liu X."/>
            <person name="Mattei B."/>
            <person name="McIntosh T.C."/>
            <person name="McLeod M.P."/>
            <person name="McPherson D."/>
            <person name="Merkulov G."/>
            <person name="Milshina N.V."/>
            <person name="Mobarry C."/>
            <person name="Morris J."/>
            <person name="Moshrefi A."/>
            <person name="Mount S.M."/>
            <person name="Moy M."/>
            <person name="Murphy B."/>
            <person name="Murphy L."/>
            <person name="Muzny D.M."/>
            <person name="Nelson D.L."/>
            <person name="Nelson D.R."/>
            <person name="Nelson K.A."/>
            <person name="Nixon K."/>
            <person name="Nusskern D.R."/>
            <person name="Pacleb J.M."/>
            <person name="Palazzolo M."/>
            <person name="Pittman G.S."/>
            <person name="Pan S."/>
            <person name="Pollard J."/>
            <person name="Puri V."/>
            <person name="Reese M.G."/>
            <person name="Reinert K."/>
            <person name="Remington K."/>
            <person name="Saunders R.D.C."/>
            <person name="Scheeler F."/>
            <person name="Shen H."/>
            <person name="Shue B.C."/>
            <person name="Siden-Kiamos I."/>
            <person name="Simpson M."/>
            <person name="Skupski M.P."/>
            <person name="Smith T.J."/>
            <person name="Spier E."/>
            <person name="Spradling A.C."/>
            <person name="Stapleton M."/>
            <person name="Strong R."/>
            <person name="Sun E."/>
            <person name="Svirskas R."/>
            <person name="Tector C."/>
            <person name="Turner R."/>
            <person name="Venter E."/>
            <person name="Wang A.H."/>
            <person name="Wang X."/>
            <person name="Wang Z.-Y."/>
            <person name="Wassarman D.A."/>
            <person name="Weinstock G.M."/>
            <person name="Weissenbach J."/>
            <person name="Williams S.M."/>
            <person name="Woodage T."/>
            <person name="Worley K.C."/>
            <person name="Wu D."/>
            <person name="Yang S."/>
            <person name="Yao Q.A."/>
            <person name="Ye J."/>
            <person name="Yeh R.-F."/>
            <person name="Zaveri J.S."/>
            <person name="Zhan M."/>
            <person name="Zhang G."/>
            <person name="Zhao Q."/>
            <person name="Zheng L."/>
            <person name="Zheng X.H."/>
            <person name="Zhong F.N."/>
            <person name="Zhong W."/>
            <person name="Zhou X."/>
            <person name="Zhu S.C."/>
            <person name="Zhu X."/>
            <person name="Smith H.O."/>
            <person name="Gibbs R.A."/>
            <person name="Myers E.W."/>
            <person name="Rubin G.M."/>
            <person name="Venter J.C."/>
        </authorList>
    </citation>
    <scope>NUCLEOTIDE SEQUENCE [LARGE SCALE GENOMIC DNA]</scope>
    <source>
        <strain>Berkeley</strain>
    </source>
</reference>
<reference key="3">
    <citation type="journal article" date="2002" name="Genome Biol.">
        <title>Annotation of the Drosophila melanogaster euchromatic genome: a systematic review.</title>
        <authorList>
            <person name="Misra S."/>
            <person name="Crosby M.A."/>
            <person name="Mungall C.J."/>
            <person name="Matthews B.B."/>
            <person name="Campbell K.S."/>
            <person name="Hradecky P."/>
            <person name="Huang Y."/>
            <person name="Kaminker J.S."/>
            <person name="Millburn G.H."/>
            <person name="Prochnik S.E."/>
            <person name="Smith C.D."/>
            <person name="Tupy J.L."/>
            <person name="Whitfield E.J."/>
            <person name="Bayraktaroglu L."/>
            <person name="Berman B.P."/>
            <person name="Bettencourt B.R."/>
            <person name="Celniker S.E."/>
            <person name="de Grey A.D.N.J."/>
            <person name="Drysdale R.A."/>
            <person name="Harris N.L."/>
            <person name="Richter J."/>
            <person name="Russo S."/>
            <person name="Schroeder A.J."/>
            <person name="Shu S.Q."/>
            <person name="Stapleton M."/>
            <person name="Yamada C."/>
            <person name="Ashburner M."/>
            <person name="Gelbart W.M."/>
            <person name="Rubin G.M."/>
            <person name="Lewis S.E."/>
        </authorList>
    </citation>
    <scope>GENOME REANNOTATION</scope>
    <source>
        <strain>Berkeley</strain>
    </source>
</reference>
<reference key="4">
    <citation type="submission" date="2009-09" db="EMBL/GenBank/DDBJ databases">
        <authorList>
            <person name="Carlson J.W."/>
            <person name="Booth B."/>
            <person name="Frise E."/>
            <person name="Park S."/>
            <person name="Wan K.H."/>
            <person name="Yu C."/>
            <person name="Celniker S.E."/>
        </authorList>
    </citation>
    <scope>NUCLEOTIDE SEQUENCE [LARGE SCALE MRNA]</scope>
    <source>
        <strain>Berkeley</strain>
        <tissue>Larva</tissue>
        <tissue>Pupae</tissue>
    </source>
</reference>
<organism>
    <name type="scientific">Drosophila melanogaster</name>
    <name type="common">Fruit fly</name>
    <dbReference type="NCBI Taxonomy" id="7227"/>
    <lineage>
        <taxon>Eukaryota</taxon>
        <taxon>Metazoa</taxon>
        <taxon>Ecdysozoa</taxon>
        <taxon>Arthropoda</taxon>
        <taxon>Hexapoda</taxon>
        <taxon>Insecta</taxon>
        <taxon>Pterygota</taxon>
        <taxon>Neoptera</taxon>
        <taxon>Endopterygota</taxon>
        <taxon>Diptera</taxon>
        <taxon>Brachycera</taxon>
        <taxon>Muscomorpha</taxon>
        <taxon>Ephydroidea</taxon>
        <taxon>Drosophilidae</taxon>
        <taxon>Drosophila</taxon>
        <taxon>Sophophora</taxon>
    </lineage>
</organism>
<gene>
    <name type="primary">TpnC73F</name>
    <name type="synonym">TnC73F</name>
    <name type="ORF">CG7930</name>
</gene>
<dbReference type="EMBL" id="X76042">
    <property type="protein sequence ID" value="CAA53627.1"/>
    <property type="molecule type" value="mRNA"/>
</dbReference>
<dbReference type="EMBL" id="AE014296">
    <property type="protein sequence ID" value="AAF49371.1"/>
    <property type="molecule type" value="Genomic_DNA"/>
</dbReference>
<dbReference type="EMBL" id="BT099811">
    <property type="protein sequence ID" value="ACV91648.1"/>
    <property type="molecule type" value="mRNA"/>
</dbReference>
<dbReference type="PIR" id="S38878">
    <property type="entry name" value="S38878"/>
</dbReference>
<dbReference type="RefSeq" id="NP_001287091.1">
    <property type="nucleotide sequence ID" value="NM_001300162.1"/>
</dbReference>
<dbReference type="RefSeq" id="NP_524122.2">
    <property type="nucleotide sequence ID" value="NM_079398.4"/>
</dbReference>
<dbReference type="SMR" id="P47949"/>
<dbReference type="BioGRID" id="65208">
    <property type="interactions" value="4"/>
</dbReference>
<dbReference type="DIP" id="DIP-23693N"/>
<dbReference type="FunCoup" id="P47949">
    <property type="interactions" value="2"/>
</dbReference>
<dbReference type="IntAct" id="P47949">
    <property type="interactions" value="18"/>
</dbReference>
<dbReference type="STRING" id="7227.FBpp0311345"/>
<dbReference type="PaxDb" id="7227-FBpp0088546"/>
<dbReference type="DNASU" id="39916"/>
<dbReference type="EnsemblMetazoa" id="FBtr0089585">
    <property type="protein sequence ID" value="FBpp0088546"/>
    <property type="gene ID" value="FBgn0010424"/>
</dbReference>
<dbReference type="EnsemblMetazoa" id="FBtr0345120">
    <property type="protein sequence ID" value="FBpp0311345"/>
    <property type="gene ID" value="FBgn0010424"/>
</dbReference>
<dbReference type="GeneID" id="39916"/>
<dbReference type="KEGG" id="dme:Dmel_CG7930"/>
<dbReference type="AGR" id="FB:FBgn0010424"/>
<dbReference type="CTD" id="39916"/>
<dbReference type="FlyBase" id="FBgn0010424">
    <property type="gene designation" value="TpnC73F"/>
</dbReference>
<dbReference type="VEuPathDB" id="VectorBase:FBgn0010424"/>
<dbReference type="eggNOG" id="KOG0027">
    <property type="taxonomic scope" value="Eukaryota"/>
</dbReference>
<dbReference type="HOGENOM" id="CLU_061288_2_4_1"/>
<dbReference type="InParanoid" id="P47949"/>
<dbReference type="OMA" id="HELDIMI"/>
<dbReference type="OrthoDB" id="26525at2759"/>
<dbReference type="PhylomeDB" id="P47949"/>
<dbReference type="BioGRID-ORCS" id="39916">
    <property type="hits" value="0 hits in 1 CRISPR screen"/>
</dbReference>
<dbReference type="ChiTaRS" id="TpnC73F">
    <property type="organism name" value="fly"/>
</dbReference>
<dbReference type="GenomeRNAi" id="39916"/>
<dbReference type="PRO" id="PR:P47949"/>
<dbReference type="Proteomes" id="UP000000803">
    <property type="component" value="Chromosome 3L"/>
</dbReference>
<dbReference type="Bgee" id="FBgn0010424">
    <property type="expression patterns" value="Expressed in visceral muscle cell in digestive tract and 81 other cell types or tissues"/>
</dbReference>
<dbReference type="ExpressionAtlas" id="P47949">
    <property type="expression patterns" value="baseline and differential"/>
</dbReference>
<dbReference type="GO" id="GO:0005813">
    <property type="term" value="C:centrosome"/>
    <property type="evidence" value="ECO:0000318"/>
    <property type="project" value="GO_Central"/>
</dbReference>
<dbReference type="GO" id="GO:0005737">
    <property type="term" value="C:cytoplasm"/>
    <property type="evidence" value="ECO:0000318"/>
    <property type="project" value="GO_Central"/>
</dbReference>
<dbReference type="GO" id="GO:0005509">
    <property type="term" value="F:calcium ion binding"/>
    <property type="evidence" value="ECO:0000318"/>
    <property type="project" value="GO_Central"/>
</dbReference>
<dbReference type="CDD" id="cd00051">
    <property type="entry name" value="EFh"/>
    <property type="match status" value="1"/>
</dbReference>
<dbReference type="FunFam" id="1.10.238.10:FF:000177">
    <property type="entry name" value="Troponin C Ia"/>
    <property type="match status" value="1"/>
</dbReference>
<dbReference type="FunFam" id="1.10.238.10:FF:000103">
    <property type="entry name" value="Troponin C Ib"/>
    <property type="match status" value="1"/>
</dbReference>
<dbReference type="Gene3D" id="1.10.238.10">
    <property type="entry name" value="EF-hand"/>
    <property type="match status" value="2"/>
</dbReference>
<dbReference type="InterPro" id="IPR050230">
    <property type="entry name" value="CALM/Myosin/TropC-like"/>
</dbReference>
<dbReference type="InterPro" id="IPR011992">
    <property type="entry name" value="EF-hand-dom_pair"/>
</dbReference>
<dbReference type="InterPro" id="IPR018247">
    <property type="entry name" value="EF_Hand_1_Ca_BS"/>
</dbReference>
<dbReference type="InterPro" id="IPR002048">
    <property type="entry name" value="EF_hand_dom"/>
</dbReference>
<dbReference type="PANTHER" id="PTHR23048:SF0">
    <property type="entry name" value="CALMODULIN LIKE 3"/>
    <property type="match status" value="1"/>
</dbReference>
<dbReference type="PANTHER" id="PTHR23048">
    <property type="entry name" value="MYOSIN LIGHT CHAIN 1, 3"/>
    <property type="match status" value="1"/>
</dbReference>
<dbReference type="Pfam" id="PF13499">
    <property type="entry name" value="EF-hand_7"/>
    <property type="match status" value="2"/>
</dbReference>
<dbReference type="SMART" id="SM00054">
    <property type="entry name" value="EFh"/>
    <property type="match status" value="4"/>
</dbReference>
<dbReference type="SUPFAM" id="SSF47473">
    <property type="entry name" value="EF-hand"/>
    <property type="match status" value="1"/>
</dbReference>
<dbReference type="PROSITE" id="PS00018">
    <property type="entry name" value="EF_HAND_1"/>
    <property type="match status" value="2"/>
</dbReference>
<dbReference type="PROSITE" id="PS50222">
    <property type="entry name" value="EF_HAND_2"/>
    <property type="match status" value="4"/>
</dbReference>
<accession>P47949</accession>
<accession>C8VV65</accession>
<accession>Q9VVE1</accession>
<feature type="chain" id="PRO_0000073688" description="Troponin C, isoform 3">
    <location>
        <begin position="1"/>
        <end position="155"/>
    </location>
</feature>
<feature type="domain" description="EF-hand 1" evidence="1">
    <location>
        <begin position="11"/>
        <end position="46"/>
    </location>
</feature>
<feature type="domain" description="EF-hand 2" evidence="1">
    <location>
        <begin position="47"/>
        <end position="82"/>
    </location>
</feature>
<feature type="domain" description="EF-hand 3" evidence="1">
    <location>
        <begin position="87"/>
        <end position="122"/>
    </location>
</feature>
<feature type="domain" description="EF-hand 4" evidence="1">
    <location>
        <begin position="123"/>
        <end position="155"/>
    </location>
</feature>
<feature type="binding site" evidence="1">
    <location>
        <position position="60"/>
    </location>
    <ligand>
        <name>Ca(2+)</name>
        <dbReference type="ChEBI" id="CHEBI:29108"/>
        <label>1</label>
    </ligand>
</feature>
<feature type="binding site" evidence="1">
    <location>
        <position position="62"/>
    </location>
    <ligand>
        <name>Ca(2+)</name>
        <dbReference type="ChEBI" id="CHEBI:29108"/>
        <label>1</label>
    </ligand>
</feature>
<feature type="binding site" evidence="1">
    <location>
        <position position="64"/>
    </location>
    <ligand>
        <name>Ca(2+)</name>
        <dbReference type="ChEBI" id="CHEBI:29108"/>
        <label>1</label>
    </ligand>
</feature>
<feature type="binding site" evidence="1">
    <location>
        <position position="66"/>
    </location>
    <ligand>
        <name>Ca(2+)</name>
        <dbReference type="ChEBI" id="CHEBI:29108"/>
        <label>1</label>
    </ligand>
</feature>
<feature type="binding site" evidence="1">
    <location>
        <position position="71"/>
    </location>
    <ligand>
        <name>Ca(2+)</name>
        <dbReference type="ChEBI" id="CHEBI:29108"/>
        <label>1</label>
    </ligand>
</feature>
<feature type="binding site" evidence="1">
    <location>
        <position position="136"/>
    </location>
    <ligand>
        <name>Ca(2+)</name>
        <dbReference type="ChEBI" id="CHEBI:29108"/>
        <label>2</label>
    </ligand>
</feature>
<feature type="binding site" evidence="1">
    <location>
        <position position="138"/>
    </location>
    <ligand>
        <name>Ca(2+)</name>
        <dbReference type="ChEBI" id="CHEBI:29108"/>
        <label>2</label>
    </ligand>
</feature>
<feature type="binding site" evidence="1">
    <location>
        <position position="140"/>
    </location>
    <ligand>
        <name>Ca(2+)</name>
        <dbReference type="ChEBI" id="CHEBI:29108"/>
        <label>2</label>
    </ligand>
</feature>
<feature type="binding site" evidence="1">
    <location>
        <position position="142"/>
    </location>
    <ligand>
        <name>Ca(2+)</name>
        <dbReference type="ChEBI" id="CHEBI:29108"/>
        <label>2</label>
    </ligand>
</feature>
<feature type="binding site" evidence="1">
    <location>
        <position position="147"/>
    </location>
    <ligand>
        <name>Ca(2+)</name>
        <dbReference type="ChEBI" id="CHEBI:29108"/>
        <label>2</label>
    </ligand>
</feature>
<feature type="sequence conflict" description="In Ref. 1; CAA53627." evidence="2" ref="1">
    <original>R</original>
    <variation>A</variation>
    <location>
        <position position="93"/>
    </location>
</feature>
<sequence length="155" mass="17696">MSSVDEDLTPEQIAVLQKAFNSFDHQKTGSIPTEMVADILRLMGQPFDKKILEELIEEVDEDKSGRLEFGEFVQLAAKFIVEEDAEAMQKELREAFRLYDKQGNGFIPTTCLKEILKELDDQLTEQELDIMIEEIDSDGSGTVDFDEFMEMMTGE</sequence>
<comment type="tissue specificity">
    <text>Present in both larval and adult muscles.</text>
</comment>
<comment type="similarity">
    <text evidence="2">Belongs to the troponin C family.</text>
</comment>
<protein>
    <recommendedName>
        <fullName>Troponin C, isoform 3</fullName>
    </recommendedName>
</protein>
<proteinExistence type="evidence at transcript level"/>